<sequence>MADMSVKQLADLVRTTPERLLEQLKEAGVAITHVDQTISDEEKRKLLLHLKTSHSTETDKKRSKIVLKRKKLSVVKSGKKSVNVEIRSKRTYTKPVVEQKRETEPAPTQEVPPTSDTTNLNEKAEVNVATLEKAVEAEVKEEAKKTPSEKKETPKKGPRKETRRSRKPDKEDKWEREELHMTKLVEERRRRHKPAHMPDSDSASAKLEQGFARPTAPVVREVALPESITVADLAQKMSVKAAEVIKAMMKLGAMVTINQRIDQETAAIVVEEMGHKPKLIKEDVLEENLVATLGEQTGEAVPRAPVVTIMGHVDHGKTSLLDYIRRTKVTSTEAGGITQHIGAYHVETELGMITFLDTPGHEAFTAMRARGAKCTDIVVLVVAADDGVMPQTVEAIQHARAAKVPVVVAVNKIDKPEADPERIKTELSTHDVLPEEWGGDTMFQPISAKTGEGIDALLERILLQAEVLELKAVDNGPARGMVVESRLDRGRGPVATVLVTSGELHLGDILLVGREYGRVRAMIGDDGRPCESAGPSMPVEVLGLSGTSVAGEEAIVVPDERKAREIARFRQGKYREVRLAKKQTAHLERIFDRMGEGKQNTLNIVLKADVQGSLEALTEALNKLSTDEVKVNIIASGVGGITESDVNLAIASDAVVIGFNVRADAPTRVLVEREGVDLRYYSIIYDLIDEVKKALSGLLAPEFEEKIVGLAEVRDVFRSSKIGAIAGCMVVEGVVRRHLPIRVLRDNVVIYEGQLESLRRYKEDVAEVRQGTECGIGVKNYNDVKVGDQIEVYEKTQVHRTIA</sequence>
<keyword id="KW-0963">Cytoplasm</keyword>
<keyword id="KW-0342">GTP-binding</keyword>
<keyword id="KW-0396">Initiation factor</keyword>
<keyword id="KW-0547">Nucleotide-binding</keyword>
<keyword id="KW-0648">Protein biosynthesis</keyword>
<keyword id="KW-1185">Reference proteome</keyword>
<name>IF2_COXBU</name>
<organism>
    <name type="scientific">Coxiella burnetii (strain RSA 493 / Nine Mile phase I)</name>
    <dbReference type="NCBI Taxonomy" id="227377"/>
    <lineage>
        <taxon>Bacteria</taxon>
        <taxon>Pseudomonadati</taxon>
        <taxon>Pseudomonadota</taxon>
        <taxon>Gammaproteobacteria</taxon>
        <taxon>Legionellales</taxon>
        <taxon>Coxiellaceae</taxon>
        <taxon>Coxiella</taxon>
    </lineage>
</organism>
<gene>
    <name evidence="2" type="primary">infB</name>
    <name type="ordered locus">CBU_1432</name>
</gene>
<proteinExistence type="inferred from homology"/>
<accession>Q83BS1</accession>
<comment type="function">
    <text evidence="2">One of the essential components for the initiation of protein synthesis. Protects formylmethionyl-tRNA from spontaneous hydrolysis and promotes its binding to the 30S ribosomal subunits. Also involved in the hydrolysis of GTP during the formation of the 70S ribosomal complex.</text>
</comment>
<comment type="subcellular location">
    <subcellularLocation>
        <location evidence="2">Cytoplasm</location>
    </subcellularLocation>
</comment>
<comment type="similarity">
    <text evidence="2">Belongs to the TRAFAC class translation factor GTPase superfamily. Classic translation factor GTPase family. IF-2 subfamily.</text>
</comment>
<feature type="chain" id="PRO_0000137198" description="Translation initiation factor IF-2">
    <location>
        <begin position="1"/>
        <end position="803"/>
    </location>
</feature>
<feature type="domain" description="tr-type G">
    <location>
        <begin position="302"/>
        <end position="471"/>
    </location>
</feature>
<feature type="region of interest" description="Disordered" evidence="3">
    <location>
        <begin position="93"/>
        <end position="123"/>
    </location>
</feature>
<feature type="region of interest" description="Disordered" evidence="3">
    <location>
        <begin position="138"/>
        <end position="206"/>
    </location>
</feature>
<feature type="region of interest" description="G1" evidence="1">
    <location>
        <begin position="311"/>
        <end position="318"/>
    </location>
</feature>
<feature type="region of interest" description="G2" evidence="1">
    <location>
        <begin position="336"/>
        <end position="340"/>
    </location>
</feature>
<feature type="region of interest" description="G3" evidence="1">
    <location>
        <begin position="357"/>
        <end position="360"/>
    </location>
</feature>
<feature type="region of interest" description="G4" evidence="1">
    <location>
        <begin position="411"/>
        <end position="414"/>
    </location>
</feature>
<feature type="region of interest" description="G5" evidence="1">
    <location>
        <begin position="447"/>
        <end position="449"/>
    </location>
</feature>
<feature type="compositionally biased region" description="Polar residues" evidence="3">
    <location>
        <begin position="111"/>
        <end position="121"/>
    </location>
</feature>
<feature type="compositionally biased region" description="Basic and acidic residues" evidence="3">
    <location>
        <begin position="138"/>
        <end position="155"/>
    </location>
</feature>
<feature type="compositionally biased region" description="Basic residues" evidence="3">
    <location>
        <begin position="156"/>
        <end position="167"/>
    </location>
</feature>
<feature type="compositionally biased region" description="Basic and acidic residues" evidence="3">
    <location>
        <begin position="168"/>
        <end position="188"/>
    </location>
</feature>
<feature type="binding site" evidence="2">
    <location>
        <begin position="311"/>
        <end position="318"/>
    </location>
    <ligand>
        <name>GTP</name>
        <dbReference type="ChEBI" id="CHEBI:37565"/>
    </ligand>
</feature>
<feature type="binding site" evidence="2">
    <location>
        <begin position="357"/>
        <end position="361"/>
    </location>
    <ligand>
        <name>GTP</name>
        <dbReference type="ChEBI" id="CHEBI:37565"/>
    </ligand>
</feature>
<feature type="binding site" evidence="2">
    <location>
        <begin position="411"/>
        <end position="414"/>
    </location>
    <ligand>
        <name>GTP</name>
        <dbReference type="ChEBI" id="CHEBI:37565"/>
    </ligand>
</feature>
<dbReference type="EMBL" id="AE016828">
    <property type="protein sequence ID" value="AAO90929.1"/>
    <property type="molecule type" value="Genomic_DNA"/>
</dbReference>
<dbReference type="RefSeq" id="NP_820415.1">
    <property type="nucleotide sequence ID" value="NC_002971.4"/>
</dbReference>
<dbReference type="RefSeq" id="WP_010958223.1">
    <property type="nucleotide sequence ID" value="NC_002971.4"/>
</dbReference>
<dbReference type="SMR" id="Q83BS1"/>
<dbReference type="STRING" id="227377.CBU_1432"/>
<dbReference type="EnsemblBacteria" id="AAO90929">
    <property type="protein sequence ID" value="AAO90929"/>
    <property type="gene ID" value="CBU_1432"/>
</dbReference>
<dbReference type="GeneID" id="1209338"/>
<dbReference type="KEGG" id="cbu:CBU_1432"/>
<dbReference type="PATRIC" id="fig|227377.7.peg.1431"/>
<dbReference type="eggNOG" id="COG0532">
    <property type="taxonomic scope" value="Bacteria"/>
</dbReference>
<dbReference type="HOGENOM" id="CLU_006301_6_0_6"/>
<dbReference type="OrthoDB" id="9811804at2"/>
<dbReference type="Proteomes" id="UP000002671">
    <property type="component" value="Chromosome"/>
</dbReference>
<dbReference type="GO" id="GO:0005737">
    <property type="term" value="C:cytoplasm"/>
    <property type="evidence" value="ECO:0000318"/>
    <property type="project" value="GO_Central"/>
</dbReference>
<dbReference type="GO" id="GO:0005829">
    <property type="term" value="C:cytosol"/>
    <property type="evidence" value="ECO:0000318"/>
    <property type="project" value="GO_Central"/>
</dbReference>
<dbReference type="GO" id="GO:0005525">
    <property type="term" value="F:GTP binding"/>
    <property type="evidence" value="ECO:0007669"/>
    <property type="project" value="UniProtKB-KW"/>
</dbReference>
<dbReference type="GO" id="GO:0003924">
    <property type="term" value="F:GTPase activity"/>
    <property type="evidence" value="ECO:0007669"/>
    <property type="project" value="UniProtKB-UniRule"/>
</dbReference>
<dbReference type="GO" id="GO:0003743">
    <property type="term" value="F:translation initiation factor activity"/>
    <property type="evidence" value="ECO:0000318"/>
    <property type="project" value="GO_Central"/>
</dbReference>
<dbReference type="GO" id="GO:0006413">
    <property type="term" value="P:translational initiation"/>
    <property type="evidence" value="ECO:0000318"/>
    <property type="project" value="GO_Central"/>
</dbReference>
<dbReference type="CDD" id="cd01887">
    <property type="entry name" value="IF2_eIF5B"/>
    <property type="match status" value="1"/>
</dbReference>
<dbReference type="CDD" id="cd03702">
    <property type="entry name" value="IF2_mtIF2_II"/>
    <property type="match status" value="1"/>
</dbReference>
<dbReference type="CDD" id="cd03692">
    <property type="entry name" value="mtIF2_IVc"/>
    <property type="match status" value="1"/>
</dbReference>
<dbReference type="FunFam" id="2.40.30.10:FF:000007">
    <property type="entry name" value="Translation initiation factor IF-2"/>
    <property type="match status" value="1"/>
</dbReference>
<dbReference type="FunFam" id="2.40.30.10:FF:000008">
    <property type="entry name" value="Translation initiation factor IF-2"/>
    <property type="match status" value="1"/>
</dbReference>
<dbReference type="FunFam" id="3.40.50.10050:FF:000001">
    <property type="entry name" value="Translation initiation factor IF-2"/>
    <property type="match status" value="1"/>
</dbReference>
<dbReference type="FunFam" id="3.40.50.300:FF:000019">
    <property type="entry name" value="Translation initiation factor IF-2"/>
    <property type="match status" value="1"/>
</dbReference>
<dbReference type="Gene3D" id="3.40.50.300">
    <property type="entry name" value="P-loop containing nucleotide triphosphate hydrolases"/>
    <property type="match status" value="1"/>
</dbReference>
<dbReference type="Gene3D" id="3.30.56.50">
    <property type="entry name" value="Putative DNA-binding domain, N-terminal subdomain of bacterial translation initiation factor IF2"/>
    <property type="match status" value="1"/>
</dbReference>
<dbReference type="Gene3D" id="2.40.30.10">
    <property type="entry name" value="Translation factors"/>
    <property type="match status" value="2"/>
</dbReference>
<dbReference type="Gene3D" id="3.40.50.10050">
    <property type="entry name" value="Translation initiation factor IF- 2, domain 3"/>
    <property type="match status" value="1"/>
</dbReference>
<dbReference type="HAMAP" id="MF_00100_B">
    <property type="entry name" value="IF_2_B"/>
    <property type="match status" value="1"/>
</dbReference>
<dbReference type="InterPro" id="IPR009061">
    <property type="entry name" value="DNA-bd_dom_put_sf"/>
</dbReference>
<dbReference type="InterPro" id="IPR053905">
    <property type="entry name" value="EF-G-like_DII"/>
</dbReference>
<dbReference type="InterPro" id="IPR044145">
    <property type="entry name" value="IF2_II"/>
</dbReference>
<dbReference type="InterPro" id="IPR006847">
    <property type="entry name" value="IF2_N"/>
</dbReference>
<dbReference type="InterPro" id="IPR027417">
    <property type="entry name" value="P-loop_NTPase"/>
</dbReference>
<dbReference type="InterPro" id="IPR005225">
    <property type="entry name" value="Small_GTP-bd"/>
</dbReference>
<dbReference type="InterPro" id="IPR000795">
    <property type="entry name" value="T_Tr_GTP-bd_dom"/>
</dbReference>
<dbReference type="InterPro" id="IPR000178">
    <property type="entry name" value="TF_IF2_bacterial-like"/>
</dbReference>
<dbReference type="InterPro" id="IPR015760">
    <property type="entry name" value="TIF_IF2"/>
</dbReference>
<dbReference type="InterPro" id="IPR023115">
    <property type="entry name" value="TIF_IF2_dom3"/>
</dbReference>
<dbReference type="InterPro" id="IPR036925">
    <property type="entry name" value="TIF_IF2_dom3_sf"/>
</dbReference>
<dbReference type="InterPro" id="IPR009000">
    <property type="entry name" value="Transl_B-barrel_sf"/>
</dbReference>
<dbReference type="NCBIfam" id="TIGR00487">
    <property type="entry name" value="IF-2"/>
    <property type="match status" value="1"/>
</dbReference>
<dbReference type="NCBIfam" id="TIGR00231">
    <property type="entry name" value="small_GTP"/>
    <property type="match status" value="1"/>
</dbReference>
<dbReference type="PANTHER" id="PTHR43381:SF5">
    <property type="entry name" value="TR-TYPE G DOMAIN-CONTAINING PROTEIN"/>
    <property type="match status" value="1"/>
</dbReference>
<dbReference type="PANTHER" id="PTHR43381">
    <property type="entry name" value="TRANSLATION INITIATION FACTOR IF-2-RELATED"/>
    <property type="match status" value="1"/>
</dbReference>
<dbReference type="Pfam" id="PF22042">
    <property type="entry name" value="EF-G_D2"/>
    <property type="match status" value="1"/>
</dbReference>
<dbReference type="Pfam" id="PF00009">
    <property type="entry name" value="GTP_EFTU"/>
    <property type="match status" value="1"/>
</dbReference>
<dbReference type="Pfam" id="PF11987">
    <property type="entry name" value="IF-2"/>
    <property type="match status" value="1"/>
</dbReference>
<dbReference type="Pfam" id="PF04760">
    <property type="entry name" value="IF2_N"/>
    <property type="match status" value="2"/>
</dbReference>
<dbReference type="SUPFAM" id="SSF52156">
    <property type="entry name" value="Initiation factor IF2/eIF5b, domain 3"/>
    <property type="match status" value="1"/>
</dbReference>
<dbReference type="SUPFAM" id="SSF52540">
    <property type="entry name" value="P-loop containing nucleoside triphosphate hydrolases"/>
    <property type="match status" value="1"/>
</dbReference>
<dbReference type="SUPFAM" id="SSF46955">
    <property type="entry name" value="Putative DNA-binding domain"/>
    <property type="match status" value="1"/>
</dbReference>
<dbReference type="SUPFAM" id="SSF50447">
    <property type="entry name" value="Translation proteins"/>
    <property type="match status" value="2"/>
</dbReference>
<dbReference type="PROSITE" id="PS51722">
    <property type="entry name" value="G_TR_2"/>
    <property type="match status" value="1"/>
</dbReference>
<dbReference type="PROSITE" id="PS01176">
    <property type="entry name" value="IF2"/>
    <property type="match status" value="1"/>
</dbReference>
<evidence type="ECO:0000250" key="1"/>
<evidence type="ECO:0000255" key="2">
    <source>
        <dbReference type="HAMAP-Rule" id="MF_00100"/>
    </source>
</evidence>
<evidence type="ECO:0000256" key="3">
    <source>
        <dbReference type="SAM" id="MobiDB-lite"/>
    </source>
</evidence>
<protein>
    <recommendedName>
        <fullName evidence="2">Translation initiation factor IF-2</fullName>
    </recommendedName>
</protein>
<reference key="1">
    <citation type="journal article" date="2003" name="Proc. Natl. Acad. Sci. U.S.A.">
        <title>Complete genome sequence of the Q-fever pathogen, Coxiella burnetii.</title>
        <authorList>
            <person name="Seshadri R."/>
            <person name="Paulsen I.T."/>
            <person name="Eisen J.A."/>
            <person name="Read T.D."/>
            <person name="Nelson K.E."/>
            <person name="Nelson W.C."/>
            <person name="Ward N.L."/>
            <person name="Tettelin H."/>
            <person name="Davidsen T.M."/>
            <person name="Beanan M.J."/>
            <person name="DeBoy R.T."/>
            <person name="Daugherty S.C."/>
            <person name="Brinkac L.M."/>
            <person name="Madupu R."/>
            <person name="Dodson R.J."/>
            <person name="Khouri H.M."/>
            <person name="Lee K.H."/>
            <person name="Carty H.A."/>
            <person name="Scanlan D."/>
            <person name="Heinzen R.A."/>
            <person name="Thompson H.A."/>
            <person name="Samuel J.E."/>
            <person name="Fraser C.M."/>
            <person name="Heidelberg J.F."/>
        </authorList>
    </citation>
    <scope>NUCLEOTIDE SEQUENCE [LARGE SCALE GENOMIC DNA]</scope>
    <source>
        <strain>RSA 493 / Nine Mile phase I</strain>
    </source>
</reference>